<feature type="chain" id="PRO_0000416411" description="Uncharacterized NAD-dependent oxidoreductase Rv0687">
    <location>
        <begin position="1"/>
        <end position="275"/>
    </location>
</feature>
<feature type="active site" description="Proton acceptor" evidence="2">
    <location>
        <position position="173"/>
    </location>
</feature>
<feature type="binding site" evidence="1">
    <location>
        <begin position="20"/>
        <end position="22"/>
    </location>
    <ligand>
        <name>NAD(+)</name>
        <dbReference type="ChEBI" id="CHEBI:57540"/>
    </ligand>
</feature>
<feature type="binding site" evidence="1">
    <location>
        <begin position="41"/>
        <end position="42"/>
    </location>
    <ligand>
        <name>NAD(+)</name>
        <dbReference type="ChEBI" id="CHEBI:57540"/>
    </ligand>
</feature>
<feature type="binding site" evidence="1">
    <location>
        <begin position="80"/>
        <end position="81"/>
    </location>
    <ligand>
        <name>NAD(+)</name>
        <dbReference type="ChEBI" id="CHEBI:57540"/>
    </ligand>
</feature>
<feature type="binding site" evidence="1">
    <location>
        <position position="107"/>
    </location>
    <ligand>
        <name>NAD(+)</name>
        <dbReference type="ChEBI" id="CHEBI:57540"/>
    </ligand>
</feature>
<feature type="binding site" evidence="1">
    <location>
        <position position="160"/>
    </location>
    <ligand>
        <name>substrate</name>
    </ligand>
</feature>
<feature type="binding site" evidence="1">
    <location>
        <position position="177"/>
    </location>
    <ligand>
        <name>NAD(+)</name>
        <dbReference type="ChEBI" id="CHEBI:57540"/>
    </ligand>
</feature>
<feature type="binding site" evidence="1">
    <location>
        <begin position="206"/>
        <end position="208"/>
    </location>
    <ligand>
        <name>NAD(+)</name>
        <dbReference type="ChEBI" id="CHEBI:57540"/>
    </ligand>
</feature>
<name>Y0687_MYCTU</name>
<keyword id="KW-0520">NAD</keyword>
<keyword id="KW-0560">Oxidoreductase</keyword>
<keyword id="KW-1185">Reference proteome</keyword>
<evidence type="ECO:0000250" key="1"/>
<evidence type="ECO:0000255" key="2">
    <source>
        <dbReference type="PROSITE-ProRule" id="PRU10001"/>
    </source>
</evidence>
<evidence type="ECO:0000305" key="3"/>
<organism>
    <name type="scientific">Mycobacterium tuberculosis (strain ATCC 25618 / H37Rv)</name>
    <dbReference type="NCBI Taxonomy" id="83332"/>
    <lineage>
        <taxon>Bacteria</taxon>
        <taxon>Bacillati</taxon>
        <taxon>Actinomycetota</taxon>
        <taxon>Actinomycetes</taxon>
        <taxon>Mycobacteriales</taxon>
        <taxon>Mycobacteriaceae</taxon>
        <taxon>Mycobacterium</taxon>
        <taxon>Mycobacterium tuberculosis complex</taxon>
    </lineage>
</organism>
<dbReference type="EC" id="1.-.-.-"/>
<dbReference type="EMBL" id="AL123456">
    <property type="protein sequence ID" value="CCP43430.1"/>
    <property type="molecule type" value="Genomic_DNA"/>
</dbReference>
<dbReference type="PIR" id="B70640">
    <property type="entry name" value="B70640"/>
</dbReference>
<dbReference type="RefSeq" id="NP_215201.1">
    <property type="nucleotide sequence ID" value="NC_000962.3"/>
</dbReference>
<dbReference type="RefSeq" id="WP_003403468.1">
    <property type="nucleotide sequence ID" value="NZ_NVQJ01000007.1"/>
</dbReference>
<dbReference type="SMR" id="P9WGS7"/>
<dbReference type="STRING" id="83332.Rv0687"/>
<dbReference type="PaxDb" id="83332-Rv0687"/>
<dbReference type="DNASU" id="888279"/>
<dbReference type="GeneID" id="888279"/>
<dbReference type="KEGG" id="mtu:Rv0687"/>
<dbReference type="KEGG" id="mtv:RVBD_0687"/>
<dbReference type="TubercuList" id="Rv0687"/>
<dbReference type="eggNOG" id="COG1028">
    <property type="taxonomic scope" value="Bacteria"/>
</dbReference>
<dbReference type="InParanoid" id="P9WGS7"/>
<dbReference type="OrthoDB" id="5173603at2"/>
<dbReference type="PhylomeDB" id="P9WGS7"/>
<dbReference type="Proteomes" id="UP000001584">
    <property type="component" value="Chromosome"/>
</dbReference>
<dbReference type="GO" id="GO:0016491">
    <property type="term" value="F:oxidoreductase activity"/>
    <property type="evidence" value="ECO:0007669"/>
    <property type="project" value="UniProtKB-KW"/>
</dbReference>
<dbReference type="CDD" id="cd05233">
    <property type="entry name" value="SDR_c"/>
    <property type="match status" value="1"/>
</dbReference>
<dbReference type="FunFam" id="3.40.50.720:FF:000084">
    <property type="entry name" value="Short-chain dehydrogenase reductase"/>
    <property type="match status" value="1"/>
</dbReference>
<dbReference type="Gene3D" id="3.40.50.720">
    <property type="entry name" value="NAD(P)-binding Rossmann-like Domain"/>
    <property type="match status" value="1"/>
</dbReference>
<dbReference type="InterPro" id="IPR036291">
    <property type="entry name" value="NAD(P)-bd_dom_sf"/>
</dbReference>
<dbReference type="InterPro" id="IPR020904">
    <property type="entry name" value="Sc_DH/Rdtase_CS"/>
</dbReference>
<dbReference type="InterPro" id="IPR002347">
    <property type="entry name" value="SDR_fam"/>
</dbReference>
<dbReference type="InterPro" id="IPR023985">
    <property type="entry name" value="SDR_subfam_1"/>
</dbReference>
<dbReference type="NCBIfam" id="NF009467">
    <property type="entry name" value="PRK12826.1-3"/>
    <property type="match status" value="1"/>
</dbReference>
<dbReference type="NCBIfam" id="TIGR03971">
    <property type="entry name" value="SDR_subfam_1"/>
    <property type="match status" value="1"/>
</dbReference>
<dbReference type="PANTHER" id="PTHR24321">
    <property type="entry name" value="DEHYDROGENASES, SHORT CHAIN"/>
    <property type="match status" value="1"/>
</dbReference>
<dbReference type="PANTHER" id="PTHR24321:SF8">
    <property type="entry name" value="ESTRADIOL 17-BETA-DEHYDROGENASE 8-RELATED"/>
    <property type="match status" value="1"/>
</dbReference>
<dbReference type="Pfam" id="PF13561">
    <property type="entry name" value="adh_short_C2"/>
    <property type="match status" value="1"/>
</dbReference>
<dbReference type="PRINTS" id="PR00081">
    <property type="entry name" value="GDHRDH"/>
</dbReference>
<dbReference type="PRINTS" id="PR00080">
    <property type="entry name" value="SDRFAMILY"/>
</dbReference>
<dbReference type="SMART" id="SM00822">
    <property type="entry name" value="PKS_KR"/>
    <property type="match status" value="1"/>
</dbReference>
<dbReference type="SUPFAM" id="SSF51735">
    <property type="entry name" value="NAD(P)-binding Rossmann-fold domains"/>
    <property type="match status" value="1"/>
</dbReference>
<dbReference type="PROSITE" id="PS00061">
    <property type="entry name" value="ADH_SHORT"/>
    <property type="match status" value="1"/>
</dbReference>
<proteinExistence type="evidence at protein level"/>
<gene>
    <name type="ordered locus">Rv0687</name>
</gene>
<protein>
    <recommendedName>
        <fullName>Uncharacterized NAD-dependent oxidoreductase Rv0687</fullName>
        <ecNumber>1.-.-.-</ecNumber>
    </recommendedName>
</protein>
<sequence>MSARGGSLHGRVAFVTGAARAQGRSHAVRLAREGADIVALDICAPVSGSVTYPPATSEDLGETVRAVEAEGRKVLAREVDIRDDAELRRLVADGVEQFGRLDIVVANAGVLGWGRLWELTDEQWETVIGVNLTGTWRTLRATVPAMIDAGNGGSIVVVSSSAGLKATPGNGHYAASKHALVALTNTLAIELGEFGIRVNSIHPYSVDTPMIEPEAMIQTFAKHPGYVHSFPPMPLQPKGFMTPDEISDVVVWLAGDGSGALSGNQIPVDKGALKY</sequence>
<reference key="1">
    <citation type="journal article" date="1998" name="Nature">
        <title>Deciphering the biology of Mycobacterium tuberculosis from the complete genome sequence.</title>
        <authorList>
            <person name="Cole S.T."/>
            <person name="Brosch R."/>
            <person name="Parkhill J."/>
            <person name="Garnier T."/>
            <person name="Churcher C.M."/>
            <person name="Harris D.E."/>
            <person name="Gordon S.V."/>
            <person name="Eiglmeier K."/>
            <person name="Gas S."/>
            <person name="Barry C.E. III"/>
            <person name="Tekaia F."/>
            <person name="Badcock K."/>
            <person name="Basham D."/>
            <person name="Brown D."/>
            <person name="Chillingworth T."/>
            <person name="Connor R."/>
            <person name="Davies R.M."/>
            <person name="Devlin K."/>
            <person name="Feltwell T."/>
            <person name="Gentles S."/>
            <person name="Hamlin N."/>
            <person name="Holroyd S."/>
            <person name="Hornsby T."/>
            <person name="Jagels K."/>
            <person name="Krogh A."/>
            <person name="McLean J."/>
            <person name="Moule S."/>
            <person name="Murphy L.D."/>
            <person name="Oliver S."/>
            <person name="Osborne J."/>
            <person name="Quail M.A."/>
            <person name="Rajandream M.A."/>
            <person name="Rogers J."/>
            <person name="Rutter S."/>
            <person name="Seeger K."/>
            <person name="Skelton S."/>
            <person name="Squares S."/>
            <person name="Squares R."/>
            <person name="Sulston J.E."/>
            <person name="Taylor K."/>
            <person name="Whitehead S."/>
            <person name="Barrell B.G."/>
        </authorList>
    </citation>
    <scope>NUCLEOTIDE SEQUENCE [LARGE SCALE GENOMIC DNA]</scope>
    <source>
        <strain>ATCC 25618 / H37Rv</strain>
    </source>
</reference>
<reference key="2">
    <citation type="journal article" date="2011" name="Mol. Cell. Proteomics">
        <title>Proteogenomic analysis of Mycobacterium tuberculosis by high resolution mass spectrometry.</title>
        <authorList>
            <person name="Kelkar D.S."/>
            <person name="Kumar D."/>
            <person name="Kumar P."/>
            <person name="Balakrishnan L."/>
            <person name="Muthusamy B."/>
            <person name="Yadav A.K."/>
            <person name="Shrivastava P."/>
            <person name="Marimuthu A."/>
            <person name="Anand S."/>
            <person name="Sundaram H."/>
            <person name="Kingsbury R."/>
            <person name="Harsha H.C."/>
            <person name="Nair B."/>
            <person name="Prasad T.S."/>
            <person name="Chauhan D.S."/>
            <person name="Katoch K."/>
            <person name="Katoch V.M."/>
            <person name="Kumar P."/>
            <person name="Chaerkady R."/>
            <person name="Ramachandran S."/>
            <person name="Dash D."/>
            <person name="Pandey A."/>
        </authorList>
    </citation>
    <scope>IDENTIFICATION BY MASS SPECTROMETRY [LARGE SCALE ANALYSIS]</scope>
    <source>
        <strain>ATCC 25618 / H37Rv</strain>
    </source>
</reference>
<comment type="similarity">
    <text evidence="3">Belongs to the short-chain dehydrogenases/reductases (SDR) family.</text>
</comment>
<accession>P9WGS7</accession>
<accession>L0T4F2</accession>
<accession>P95033</accession>
<accession>Q7D9F4</accession>